<accession>Q7VEN6</accession>
<accession>A0A1R3Y0J9</accession>
<accession>X2BK50</accession>
<feature type="chain" id="PRO_0000146885" description="Adenosylcobinamide-GDP ribazoletransferase">
    <location>
        <begin position="1"/>
        <end position="249"/>
    </location>
</feature>
<feature type="transmembrane region" description="Helical" evidence="1">
    <location>
        <begin position="32"/>
        <end position="52"/>
    </location>
</feature>
<feature type="transmembrane region" description="Helical" evidence="1">
    <location>
        <begin position="109"/>
        <end position="129"/>
    </location>
</feature>
<feature type="transmembrane region" description="Helical" evidence="1">
    <location>
        <begin position="132"/>
        <end position="152"/>
    </location>
</feature>
<feature type="transmembrane region" description="Helical" evidence="1">
    <location>
        <begin position="173"/>
        <end position="193"/>
    </location>
</feature>
<feature type="transmembrane region" description="Helical" evidence="1">
    <location>
        <begin position="198"/>
        <end position="218"/>
    </location>
</feature>
<gene>
    <name evidence="1" type="primary">cobS</name>
    <name type="ordered locus">BQ2027_MB2231</name>
</gene>
<sequence length="249" mass="24320">MMRSLATAFAFATVIPTPGSATTPMGRGPMTALPVVGAALGALAAAIAWAGAQVFGPSSPLSGMLTVAVLLVVTRGLHIDGVADTADGLGCYGPPQRALAVMRDGSTGPFGVAAVVLVIALQGLAFATLTTVGIAGITLAVLSGRVTAVLVCRRSVPAAHGSTLGSRVAGTQPAPVVAAWLAVLLAVSVPAGPRPWQGPIAVLVAVTAGAALAAHCVHRFGGVTGDVLGSAIELSTTVSAVTLAGLARL</sequence>
<dbReference type="EC" id="2.7.8.26" evidence="1"/>
<dbReference type="EMBL" id="LT708304">
    <property type="protein sequence ID" value="SIU00839.1"/>
    <property type="molecule type" value="Genomic_DNA"/>
</dbReference>
<dbReference type="RefSeq" id="NP_855880.1">
    <property type="nucleotide sequence ID" value="NC_002945.3"/>
</dbReference>
<dbReference type="RefSeq" id="WP_003411433.1">
    <property type="nucleotide sequence ID" value="NC_002945.4"/>
</dbReference>
<dbReference type="KEGG" id="mbo:BQ2027_MB2231"/>
<dbReference type="PATRIC" id="fig|233413.5.peg.2447"/>
<dbReference type="UniPathway" id="UPA00148">
    <property type="reaction ID" value="UER00238"/>
</dbReference>
<dbReference type="Proteomes" id="UP000001419">
    <property type="component" value="Chromosome"/>
</dbReference>
<dbReference type="GO" id="GO:0005886">
    <property type="term" value="C:plasma membrane"/>
    <property type="evidence" value="ECO:0007669"/>
    <property type="project" value="UniProtKB-SubCell"/>
</dbReference>
<dbReference type="GO" id="GO:0051073">
    <property type="term" value="F:adenosylcobinamide-GDP ribazoletransferase activity"/>
    <property type="evidence" value="ECO:0007669"/>
    <property type="project" value="UniProtKB-UniRule"/>
</dbReference>
<dbReference type="GO" id="GO:0008818">
    <property type="term" value="F:cobalamin 5'-phosphate synthase activity"/>
    <property type="evidence" value="ECO:0007669"/>
    <property type="project" value="UniProtKB-UniRule"/>
</dbReference>
<dbReference type="GO" id="GO:0009236">
    <property type="term" value="P:cobalamin biosynthetic process"/>
    <property type="evidence" value="ECO:0007669"/>
    <property type="project" value="UniProtKB-UniRule"/>
</dbReference>
<dbReference type="HAMAP" id="MF_00719">
    <property type="entry name" value="CobS"/>
    <property type="match status" value="1"/>
</dbReference>
<dbReference type="InterPro" id="IPR003805">
    <property type="entry name" value="CobS"/>
</dbReference>
<dbReference type="NCBIfam" id="NF001279">
    <property type="entry name" value="PRK00235.2-1"/>
    <property type="match status" value="1"/>
</dbReference>
<dbReference type="PANTHER" id="PTHR34148">
    <property type="entry name" value="ADENOSYLCOBINAMIDE-GDP RIBAZOLETRANSFERASE"/>
    <property type="match status" value="1"/>
</dbReference>
<dbReference type="PANTHER" id="PTHR34148:SF1">
    <property type="entry name" value="ADENOSYLCOBINAMIDE-GDP RIBAZOLETRANSFERASE"/>
    <property type="match status" value="1"/>
</dbReference>
<dbReference type="Pfam" id="PF02654">
    <property type="entry name" value="CobS"/>
    <property type="match status" value="1"/>
</dbReference>
<protein>
    <recommendedName>
        <fullName evidence="1">Adenosylcobinamide-GDP ribazoletransferase</fullName>
        <ecNumber evidence="1">2.7.8.26</ecNumber>
    </recommendedName>
    <alternativeName>
        <fullName evidence="1">Cobalamin synthase</fullName>
    </alternativeName>
    <alternativeName>
        <fullName evidence="1">Cobalamin-5'-phosphate synthase</fullName>
    </alternativeName>
</protein>
<comment type="function">
    <text evidence="1">Joins adenosylcobinamide-GDP and alpha-ribazole to generate adenosylcobalamin (Ado-cobalamin). Also synthesizes adenosylcobalamin 5'-phosphate from adenosylcobinamide-GDP and alpha-ribazole 5'-phosphate.</text>
</comment>
<comment type="catalytic activity">
    <reaction evidence="1">
        <text>alpha-ribazole + adenosylcob(III)inamide-GDP = adenosylcob(III)alamin + GMP + H(+)</text>
        <dbReference type="Rhea" id="RHEA:16049"/>
        <dbReference type="ChEBI" id="CHEBI:10329"/>
        <dbReference type="ChEBI" id="CHEBI:15378"/>
        <dbReference type="ChEBI" id="CHEBI:18408"/>
        <dbReference type="ChEBI" id="CHEBI:58115"/>
        <dbReference type="ChEBI" id="CHEBI:60487"/>
        <dbReference type="EC" id="2.7.8.26"/>
    </reaction>
</comment>
<comment type="catalytic activity">
    <reaction evidence="1">
        <text>alpha-ribazole 5'-phosphate + adenosylcob(III)inamide-GDP = adenosylcob(III)alamin 5'-phosphate + GMP + H(+)</text>
        <dbReference type="Rhea" id="RHEA:23560"/>
        <dbReference type="ChEBI" id="CHEBI:15378"/>
        <dbReference type="ChEBI" id="CHEBI:57918"/>
        <dbReference type="ChEBI" id="CHEBI:58115"/>
        <dbReference type="ChEBI" id="CHEBI:60487"/>
        <dbReference type="ChEBI" id="CHEBI:60493"/>
        <dbReference type="EC" id="2.7.8.26"/>
    </reaction>
</comment>
<comment type="cofactor">
    <cofactor evidence="1">
        <name>Mg(2+)</name>
        <dbReference type="ChEBI" id="CHEBI:18420"/>
    </cofactor>
</comment>
<comment type="pathway">
    <text evidence="1">Cofactor biosynthesis; adenosylcobalamin biosynthesis; adenosylcobalamin from cob(II)yrinate a,c-diamide: step 7/7.</text>
</comment>
<comment type="subcellular location">
    <subcellularLocation>
        <location evidence="1">Cell membrane</location>
        <topology evidence="1">Multi-pass membrane protein</topology>
    </subcellularLocation>
</comment>
<comment type="similarity">
    <text evidence="1">Belongs to the CobS family.</text>
</comment>
<keyword id="KW-1003">Cell membrane</keyword>
<keyword id="KW-0169">Cobalamin biosynthesis</keyword>
<keyword id="KW-0460">Magnesium</keyword>
<keyword id="KW-0472">Membrane</keyword>
<keyword id="KW-1185">Reference proteome</keyword>
<keyword id="KW-0808">Transferase</keyword>
<keyword id="KW-0812">Transmembrane</keyword>
<keyword id="KW-1133">Transmembrane helix</keyword>
<proteinExistence type="inferred from homology"/>
<name>COBS_MYCBO</name>
<reference key="1">
    <citation type="journal article" date="2003" name="Proc. Natl. Acad. Sci. U.S.A.">
        <title>The complete genome sequence of Mycobacterium bovis.</title>
        <authorList>
            <person name="Garnier T."/>
            <person name="Eiglmeier K."/>
            <person name="Camus J.-C."/>
            <person name="Medina N."/>
            <person name="Mansoor H."/>
            <person name="Pryor M."/>
            <person name="Duthoy S."/>
            <person name="Grondin S."/>
            <person name="Lacroix C."/>
            <person name="Monsempe C."/>
            <person name="Simon S."/>
            <person name="Harris B."/>
            <person name="Atkin R."/>
            <person name="Doggett J."/>
            <person name="Mayes R."/>
            <person name="Keating L."/>
            <person name="Wheeler P.R."/>
            <person name="Parkhill J."/>
            <person name="Barrell B.G."/>
            <person name="Cole S.T."/>
            <person name="Gordon S.V."/>
            <person name="Hewinson R.G."/>
        </authorList>
    </citation>
    <scope>NUCLEOTIDE SEQUENCE [LARGE SCALE GENOMIC DNA]</scope>
    <source>
        <strain>ATCC BAA-935 / AF2122/97</strain>
    </source>
</reference>
<reference key="2">
    <citation type="journal article" date="2017" name="Genome Announc.">
        <title>Updated reference genome sequence and annotation of Mycobacterium bovis AF2122/97.</title>
        <authorList>
            <person name="Malone K.M."/>
            <person name="Farrell D."/>
            <person name="Stuber T.P."/>
            <person name="Schubert O.T."/>
            <person name="Aebersold R."/>
            <person name="Robbe-Austerman S."/>
            <person name="Gordon S.V."/>
        </authorList>
    </citation>
    <scope>NUCLEOTIDE SEQUENCE [LARGE SCALE GENOMIC DNA]</scope>
    <scope>GENOME REANNOTATION</scope>
    <source>
        <strain>ATCC BAA-935 / AF2122/97</strain>
    </source>
</reference>
<evidence type="ECO:0000255" key="1">
    <source>
        <dbReference type="HAMAP-Rule" id="MF_00719"/>
    </source>
</evidence>
<organism>
    <name type="scientific">Mycobacterium bovis (strain ATCC BAA-935 / AF2122/97)</name>
    <dbReference type="NCBI Taxonomy" id="233413"/>
    <lineage>
        <taxon>Bacteria</taxon>
        <taxon>Bacillati</taxon>
        <taxon>Actinomycetota</taxon>
        <taxon>Actinomycetes</taxon>
        <taxon>Mycobacteriales</taxon>
        <taxon>Mycobacteriaceae</taxon>
        <taxon>Mycobacterium</taxon>
        <taxon>Mycobacterium tuberculosis complex</taxon>
    </lineage>
</organism>